<gene>
    <name evidence="1" type="primary">rplQ</name>
    <name type="ordered locus">BURPS1106A_3777</name>
</gene>
<dbReference type="EMBL" id="CP000572">
    <property type="protein sequence ID" value="ABN89049.1"/>
    <property type="molecule type" value="Genomic_DNA"/>
</dbReference>
<dbReference type="RefSeq" id="WP_004197924.1">
    <property type="nucleotide sequence ID" value="NC_009076.1"/>
</dbReference>
<dbReference type="SMR" id="A3P086"/>
<dbReference type="GeneID" id="93061805"/>
<dbReference type="KEGG" id="bpl:BURPS1106A_3777"/>
<dbReference type="HOGENOM" id="CLU_074407_2_0_4"/>
<dbReference type="Proteomes" id="UP000006738">
    <property type="component" value="Chromosome I"/>
</dbReference>
<dbReference type="GO" id="GO:0022625">
    <property type="term" value="C:cytosolic large ribosomal subunit"/>
    <property type="evidence" value="ECO:0007669"/>
    <property type="project" value="TreeGrafter"/>
</dbReference>
<dbReference type="GO" id="GO:0003735">
    <property type="term" value="F:structural constituent of ribosome"/>
    <property type="evidence" value="ECO:0007669"/>
    <property type="project" value="InterPro"/>
</dbReference>
<dbReference type="GO" id="GO:0006412">
    <property type="term" value="P:translation"/>
    <property type="evidence" value="ECO:0007669"/>
    <property type="project" value="UniProtKB-UniRule"/>
</dbReference>
<dbReference type="FunFam" id="3.90.1030.10:FF:000001">
    <property type="entry name" value="50S ribosomal protein L17"/>
    <property type="match status" value="1"/>
</dbReference>
<dbReference type="Gene3D" id="3.90.1030.10">
    <property type="entry name" value="Ribosomal protein L17"/>
    <property type="match status" value="1"/>
</dbReference>
<dbReference type="HAMAP" id="MF_01368">
    <property type="entry name" value="Ribosomal_bL17"/>
    <property type="match status" value="1"/>
</dbReference>
<dbReference type="InterPro" id="IPR000456">
    <property type="entry name" value="Ribosomal_bL17"/>
</dbReference>
<dbReference type="InterPro" id="IPR047859">
    <property type="entry name" value="Ribosomal_bL17_CS"/>
</dbReference>
<dbReference type="InterPro" id="IPR036373">
    <property type="entry name" value="Ribosomal_bL17_sf"/>
</dbReference>
<dbReference type="NCBIfam" id="TIGR00059">
    <property type="entry name" value="L17"/>
    <property type="match status" value="1"/>
</dbReference>
<dbReference type="PANTHER" id="PTHR14413:SF16">
    <property type="entry name" value="LARGE RIBOSOMAL SUBUNIT PROTEIN BL17M"/>
    <property type="match status" value="1"/>
</dbReference>
<dbReference type="PANTHER" id="PTHR14413">
    <property type="entry name" value="RIBOSOMAL PROTEIN L17"/>
    <property type="match status" value="1"/>
</dbReference>
<dbReference type="Pfam" id="PF01196">
    <property type="entry name" value="Ribosomal_L17"/>
    <property type="match status" value="1"/>
</dbReference>
<dbReference type="SUPFAM" id="SSF64263">
    <property type="entry name" value="Prokaryotic ribosomal protein L17"/>
    <property type="match status" value="1"/>
</dbReference>
<dbReference type="PROSITE" id="PS01167">
    <property type="entry name" value="RIBOSOMAL_L17"/>
    <property type="match status" value="1"/>
</dbReference>
<protein>
    <recommendedName>
        <fullName evidence="1">Large ribosomal subunit protein bL17</fullName>
    </recommendedName>
    <alternativeName>
        <fullName evidence="2">50S ribosomal protein L17</fullName>
    </alternativeName>
</protein>
<feature type="chain" id="PRO_1000055786" description="Large ribosomal subunit protein bL17">
    <location>
        <begin position="1"/>
        <end position="131"/>
    </location>
</feature>
<comment type="subunit">
    <text evidence="1">Part of the 50S ribosomal subunit. Contacts protein L32.</text>
</comment>
<comment type="similarity">
    <text evidence="1">Belongs to the bacterial ribosomal protein bL17 family.</text>
</comment>
<reference key="1">
    <citation type="journal article" date="2010" name="Genome Biol. Evol.">
        <title>Continuing evolution of Burkholderia mallei through genome reduction and large-scale rearrangements.</title>
        <authorList>
            <person name="Losada L."/>
            <person name="Ronning C.M."/>
            <person name="DeShazer D."/>
            <person name="Woods D."/>
            <person name="Fedorova N."/>
            <person name="Kim H.S."/>
            <person name="Shabalina S.A."/>
            <person name="Pearson T.R."/>
            <person name="Brinkac L."/>
            <person name="Tan P."/>
            <person name="Nandi T."/>
            <person name="Crabtree J."/>
            <person name="Badger J."/>
            <person name="Beckstrom-Sternberg S."/>
            <person name="Saqib M."/>
            <person name="Schutzer S.E."/>
            <person name="Keim P."/>
            <person name="Nierman W.C."/>
        </authorList>
    </citation>
    <scope>NUCLEOTIDE SEQUENCE [LARGE SCALE GENOMIC DNA]</scope>
    <source>
        <strain>1106a</strain>
    </source>
</reference>
<proteinExistence type="inferred from homology"/>
<organism>
    <name type="scientific">Burkholderia pseudomallei (strain 1106a)</name>
    <dbReference type="NCBI Taxonomy" id="357348"/>
    <lineage>
        <taxon>Bacteria</taxon>
        <taxon>Pseudomonadati</taxon>
        <taxon>Pseudomonadota</taxon>
        <taxon>Betaproteobacteria</taxon>
        <taxon>Burkholderiales</taxon>
        <taxon>Burkholderiaceae</taxon>
        <taxon>Burkholderia</taxon>
        <taxon>pseudomallei group</taxon>
    </lineage>
</organism>
<evidence type="ECO:0000255" key="1">
    <source>
        <dbReference type="HAMAP-Rule" id="MF_01368"/>
    </source>
</evidence>
<evidence type="ECO:0000305" key="2"/>
<sequence>MRHRHGLRKLNRTSSHRLAMLRNMSNSLIEHEVIKTTLPKAKELRKVVEPLITLGKKPSLANRRLAFNRLRDRDSVAKLFDVLGPRFANRPGGYLRILKFGFRVGDNAPMALVELLDRPEVEETENVQEAE</sequence>
<accession>A3P086</accession>
<keyword id="KW-0687">Ribonucleoprotein</keyword>
<keyword id="KW-0689">Ribosomal protein</keyword>
<name>RL17_BURP0</name>